<feature type="chain" id="PRO_0000266950" description="Probable GTP-binding protein EngB">
    <location>
        <begin position="1"/>
        <end position="210"/>
    </location>
</feature>
<feature type="domain" description="EngB-type G" evidence="1">
    <location>
        <begin position="25"/>
        <end position="199"/>
    </location>
</feature>
<feature type="binding site" evidence="1">
    <location>
        <begin position="33"/>
        <end position="40"/>
    </location>
    <ligand>
        <name>GTP</name>
        <dbReference type="ChEBI" id="CHEBI:37565"/>
    </ligand>
</feature>
<feature type="binding site" evidence="1">
    <location>
        <position position="40"/>
    </location>
    <ligand>
        <name>Mg(2+)</name>
        <dbReference type="ChEBI" id="CHEBI:18420"/>
    </ligand>
</feature>
<feature type="binding site" evidence="1">
    <location>
        <begin position="60"/>
        <end position="64"/>
    </location>
    <ligand>
        <name>GTP</name>
        <dbReference type="ChEBI" id="CHEBI:37565"/>
    </ligand>
</feature>
<feature type="binding site" evidence="1">
    <location>
        <position position="62"/>
    </location>
    <ligand>
        <name>Mg(2+)</name>
        <dbReference type="ChEBI" id="CHEBI:18420"/>
    </ligand>
</feature>
<feature type="binding site" evidence="1">
    <location>
        <begin position="78"/>
        <end position="81"/>
    </location>
    <ligand>
        <name>GTP</name>
        <dbReference type="ChEBI" id="CHEBI:37565"/>
    </ligand>
</feature>
<feature type="binding site" evidence="1">
    <location>
        <begin position="145"/>
        <end position="148"/>
    </location>
    <ligand>
        <name>GTP</name>
        <dbReference type="ChEBI" id="CHEBI:37565"/>
    </ligand>
</feature>
<feature type="binding site" evidence="1">
    <location>
        <begin position="178"/>
        <end position="180"/>
    </location>
    <ligand>
        <name>GTP</name>
        <dbReference type="ChEBI" id="CHEBI:37565"/>
    </ligand>
</feature>
<proteinExistence type="inferred from homology"/>
<keyword id="KW-0131">Cell cycle</keyword>
<keyword id="KW-0132">Cell division</keyword>
<keyword id="KW-0342">GTP-binding</keyword>
<keyword id="KW-0460">Magnesium</keyword>
<keyword id="KW-0479">Metal-binding</keyword>
<keyword id="KW-0547">Nucleotide-binding</keyword>
<keyword id="KW-1185">Reference proteome</keyword>
<keyword id="KW-0717">Septation</keyword>
<reference key="1">
    <citation type="journal article" date="2005" name="Nucleic Acids Res.">
        <title>Genome dynamics and diversity of Shigella species, the etiologic agents of bacillary dysentery.</title>
        <authorList>
            <person name="Yang F."/>
            <person name="Yang J."/>
            <person name="Zhang X."/>
            <person name="Chen L."/>
            <person name="Jiang Y."/>
            <person name="Yan Y."/>
            <person name="Tang X."/>
            <person name="Wang J."/>
            <person name="Xiong Z."/>
            <person name="Dong J."/>
            <person name="Xue Y."/>
            <person name="Zhu Y."/>
            <person name="Xu X."/>
            <person name="Sun L."/>
            <person name="Chen S."/>
            <person name="Nie H."/>
            <person name="Peng J."/>
            <person name="Xu J."/>
            <person name="Wang Y."/>
            <person name="Yuan Z."/>
            <person name="Wen Y."/>
            <person name="Yao Z."/>
            <person name="Shen Y."/>
            <person name="Qiang B."/>
            <person name="Hou Y."/>
            <person name="Yu J."/>
            <person name="Jin Q."/>
        </authorList>
    </citation>
    <scope>NUCLEOTIDE SEQUENCE [LARGE SCALE GENOMIC DNA]</scope>
    <source>
        <strain>Ss046</strain>
    </source>
</reference>
<gene>
    <name evidence="1" type="primary">engB</name>
    <name type="ordered locus">SSON_4037</name>
</gene>
<accession>Q3YVA8</accession>
<comment type="function">
    <text evidence="1">Necessary for normal cell division and for the maintenance of normal septation.</text>
</comment>
<comment type="cofactor">
    <cofactor evidence="1">
        <name>Mg(2+)</name>
        <dbReference type="ChEBI" id="CHEBI:18420"/>
    </cofactor>
</comment>
<comment type="similarity">
    <text evidence="1">Belongs to the TRAFAC class TrmE-Era-EngA-EngB-Septin-like GTPase superfamily. EngB GTPase family.</text>
</comment>
<comment type="sequence caution" evidence="2">
    <conflict type="erroneous initiation">
        <sequence resource="EMBL-CDS" id="AAZ90554"/>
    </conflict>
</comment>
<name>ENGB_SHISS</name>
<organism>
    <name type="scientific">Shigella sonnei (strain Ss046)</name>
    <dbReference type="NCBI Taxonomy" id="300269"/>
    <lineage>
        <taxon>Bacteria</taxon>
        <taxon>Pseudomonadati</taxon>
        <taxon>Pseudomonadota</taxon>
        <taxon>Gammaproteobacteria</taxon>
        <taxon>Enterobacterales</taxon>
        <taxon>Enterobacteriaceae</taxon>
        <taxon>Shigella</taxon>
    </lineage>
</organism>
<sequence>MTNLNYQQTHFVMSAPDIRHLPSDTGIEVAFAGRSNAGKSSALNTLTNQKSLARTSKTPGRTQLINLFEVADGKRLVDLPGYGYAEVPEEMKRKWQRALGEYLEKRQSLQGLVVLMDIRHPLKDLDQQMIEWAVDSNIAVLVLLTKADKLASGARKAQLNMVREAVLAFNGDVQVETFSSLKKQGVDKLRQKLDTWFSEMQPVEETQDGE</sequence>
<protein>
    <recommendedName>
        <fullName evidence="1">Probable GTP-binding protein EngB</fullName>
    </recommendedName>
</protein>
<evidence type="ECO:0000255" key="1">
    <source>
        <dbReference type="HAMAP-Rule" id="MF_00321"/>
    </source>
</evidence>
<evidence type="ECO:0000305" key="2"/>
<dbReference type="EMBL" id="CP000038">
    <property type="protein sequence ID" value="AAZ90554.1"/>
    <property type="status" value="ALT_INIT"/>
    <property type="molecule type" value="Genomic_DNA"/>
</dbReference>
<dbReference type="SMR" id="Q3YVA8"/>
<dbReference type="KEGG" id="ssn:SSON_4037"/>
<dbReference type="HOGENOM" id="CLU_033732_1_0_6"/>
<dbReference type="Proteomes" id="UP000002529">
    <property type="component" value="Chromosome"/>
</dbReference>
<dbReference type="GO" id="GO:0005829">
    <property type="term" value="C:cytosol"/>
    <property type="evidence" value="ECO:0007669"/>
    <property type="project" value="TreeGrafter"/>
</dbReference>
<dbReference type="GO" id="GO:0005525">
    <property type="term" value="F:GTP binding"/>
    <property type="evidence" value="ECO:0007669"/>
    <property type="project" value="UniProtKB-UniRule"/>
</dbReference>
<dbReference type="GO" id="GO:0046872">
    <property type="term" value="F:metal ion binding"/>
    <property type="evidence" value="ECO:0007669"/>
    <property type="project" value="UniProtKB-KW"/>
</dbReference>
<dbReference type="GO" id="GO:0000917">
    <property type="term" value="P:division septum assembly"/>
    <property type="evidence" value="ECO:0007669"/>
    <property type="project" value="UniProtKB-KW"/>
</dbReference>
<dbReference type="CDD" id="cd01876">
    <property type="entry name" value="YihA_EngB"/>
    <property type="match status" value="1"/>
</dbReference>
<dbReference type="FunFam" id="3.40.50.300:FF:000098">
    <property type="entry name" value="Probable GTP-binding protein EngB"/>
    <property type="match status" value="1"/>
</dbReference>
<dbReference type="Gene3D" id="3.40.50.300">
    <property type="entry name" value="P-loop containing nucleotide triphosphate hydrolases"/>
    <property type="match status" value="1"/>
</dbReference>
<dbReference type="HAMAP" id="MF_00321">
    <property type="entry name" value="GTPase_EngB"/>
    <property type="match status" value="1"/>
</dbReference>
<dbReference type="InterPro" id="IPR030393">
    <property type="entry name" value="G_ENGB_dom"/>
</dbReference>
<dbReference type="InterPro" id="IPR006073">
    <property type="entry name" value="GTP-bd"/>
</dbReference>
<dbReference type="InterPro" id="IPR019987">
    <property type="entry name" value="GTP-bd_ribosome_bio_YsxC"/>
</dbReference>
<dbReference type="InterPro" id="IPR027417">
    <property type="entry name" value="P-loop_NTPase"/>
</dbReference>
<dbReference type="NCBIfam" id="TIGR03598">
    <property type="entry name" value="GTPase_YsxC"/>
    <property type="match status" value="1"/>
</dbReference>
<dbReference type="PANTHER" id="PTHR11649:SF13">
    <property type="entry name" value="ENGB-TYPE G DOMAIN-CONTAINING PROTEIN"/>
    <property type="match status" value="1"/>
</dbReference>
<dbReference type="PANTHER" id="PTHR11649">
    <property type="entry name" value="MSS1/TRME-RELATED GTP-BINDING PROTEIN"/>
    <property type="match status" value="1"/>
</dbReference>
<dbReference type="Pfam" id="PF01926">
    <property type="entry name" value="MMR_HSR1"/>
    <property type="match status" value="1"/>
</dbReference>
<dbReference type="SUPFAM" id="SSF52540">
    <property type="entry name" value="P-loop containing nucleoside triphosphate hydrolases"/>
    <property type="match status" value="1"/>
</dbReference>
<dbReference type="PROSITE" id="PS51706">
    <property type="entry name" value="G_ENGB"/>
    <property type="match status" value="1"/>
</dbReference>